<comment type="function">
    <text evidence="1">Binds directly to 23S rRNA. The L1 stalk is quite mobile in the ribosome, and is involved in E site tRNA release.</text>
</comment>
<comment type="function">
    <text evidence="1">Protein L1 is also a translational repressor protein, it controls the translation of the L11 operon by binding to its mRNA.</text>
</comment>
<comment type="subunit">
    <text evidence="1">Part of the 50S ribosomal subunit.</text>
</comment>
<comment type="similarity">
    <text evidence="1">Belongs to the universal ribosomal protein uL1 family.</text>
</comment>
<reference key="1">
    <citation type="journal article" date="2009" name="Genome Res.">
        <title>Newly introduced genomic prophage islands are critical determinants of in vivo competitiveness in the Liverpool epidemic strain of Pseudomonas aeruginosa.</title>
        <authorList>
            <person name="Winstanley C."/>
            <person name="Langille M.G.I."/>
            <person name="Fothergill J.L."/>
            <person name="Kukavica-Ibrulj I."/>
            <person name="Paradis-Bleau C."/>
            <person name="Sanschagrin F."/>
            <person name="Thomson N.R."/>
            <person name="Winsor G.L."/>
            <person name="Quail M.A."/>
            <person name="Lennard N."/>
            <person name="Bignell A."/>
            <person name="Clarke L."/>
            <person name="Seeger K."/>
            <person name="Saunders D."/>
            <person name="Harris D."/>
            <person name="Parkhill J."/>
            <person name="Hancock R.E.W."/>
            <person name="Brinkman F.S.L."/>
            <person name="Levesque R.C."/>
        </authorList>
    </citation>
    <scope>NUCLEOTIDE SEQUENCE [LARGE SCALE GENOMIC DNA]</scope>
    <source>
        <strain>LESB58</strain>
    </source>
</reference>
<proteinExistence type="inferred from homology"/>
<sequence length="231" mass="24234">MAKLTKRQKAIAEKVVAGKQYSFEEAAKLLAELSTIKFKESVDVAVNLGVDPRKSDQVVRGATVLPNGTGKSVRVAVFTQGPAAEAALAAGADKVGMDELAAEMKGGDLNYDVVIASPDAMRVVGQLGQILGPRGLMPNPKVGTVTPDVATAVKNAKAGQVRFRTDKNGIIHSSVGKVDFEPAKLQQNVEALLADLKRLKPSSSKGVYVKRVTLSTTMGPGLQIDLASLEA</sequence>
<organism>
    <name type="scientific">Pseudomonas aeruginosa (strain LESB58)</name>
    <dbReference type="NCBI Taxonomy" id="557722"/>
    <lineage>
        <taxon>Bacteria</taxon>
        <taxon>Pseudomonadati</taxon>
        <taxon>Pseudomonadota</taxon>
        <taxon>Gammaproteobacteria</taxon>
        <taxon>Pseudomonadales</taxon>
        <taxon>Pseudomonadaceae</taxon>
        <taxon>Pseudomonas</taxon>
    </lineage>
</organism>
<keyword id="KW-0678">Repressor</keyword>
<keyword id="KW-0687">Ribonucleoprotein</keyword>
<keyword id="KW-0689">Ribosomal protein</keyword>
<keyword id="KW-0694">RNA-binding</keyword>
<keyword id="KW-0699">rRNA-binding</keyword>
<keyword id="KW-0810">Translation regulation</keyword>
<keyword id="KW-0820">tRNA-binding</keyword>
<accession>B7V634</accession>
<dbReference type="EMBL" id="FM209186">
    <property type="protein sequence ID" value="CAW25382.1"/>
    <property type="molecule type" value="Genomic_DNA"/>
</dbReference>
<dbReference type="RefSeq" id="WP_003093749.1">
    <property type="nucleotide sequence ID" value="NC_011770.1"/>
</dbReference>
<dbReference type="SMR" id="B7V634"/>
<dbReference type="GeneID" id="77219188"/>
<dbReference type="KEGG" id="pag:PLES_06551"/>
<dbReference type="HOGENOM" id="CLU_062853_0_0_6"/>
<dbReference type="GO" id="GO:0022625">
    <property type="term" value="C:cytosolic large ribosomal subunit"/>
    <property type="evidence" value="ECO:0007669"/>
    <property type="project" value="TreeGrafter"/>
</dbReference>
<dbReference type="GO" id="GO:0019843">
    <property type="term" value="F:rRNA binding"/>
    <property type="evidence" value="ECO:0007669"/>
    <property type="project" value="UniProtKB-UniRule"/>
</dbReference>
<dbReference type="GO" id="GO:0003735">
    <property type="term" value="F:structural constituent of ribosome"/>
    <property type="evidence" value="ECO:0007669"/>
    <property type="project" value="InterPro"/>
</dbReference>
<dbReference type="GO" id="GO:0000049">
    <property type="term" value="F:tRNA binding"/>
    <property type="evidence" value="ECO:0007669"/>
    <property type="project" value="UniProtKB-KW"/>
</dbReference>
<dbReference type="GO" id="GO:0006417">
    <property type="term" value="P:regulation of translation"/>
    <property type="evidence" value="ECO:0007669"/>
    <property type="project" value="UniProtKB-KW"/>
</dbReference>
<dbReference type="GO" id="GO:0006412">
    <property type="term" value="P:translation"/>
    <property type="evidence" value="ECO:0007669"/>
    <property type="project" value="UniProtKB-UniRule"/>
</dbReference>
<dbReference type="CDD" id="cd00403">
    <property type="entry name" value="Ribosomal_L1"/>
    <property type="match status" value="1"/>
</dbReference>
<dbReference type="FunFam" id="3.40.50.790:FF:000001">
    <property type="entry name" value="50S ribosomal protein L1"/>
    <property type="match status" value="1"/>
</dbReference>
<dbReference type="Gene3D" id="3.30.190.20">
    <property type="match status" value="1"/>
</dbReference>
<dbReference type="Gene3D" id="3.40.50.790">
    <property type="match status" value="1"/>
</dbReference>
<dbReference type="HAMAP" id="MF_01318_B">
    <property type="entry name" value="Ribosomal_uL1_B"/>
    <property type="match status" value="1"/>
</dbReference>
<dbReference type="InterPro" id="IPR005878">
    <property type="entry name" value="Ribosom_uL1_bac-type"/>
</dbReference>
<dbReference type="InterPro" id="IPR002143">
    <property type="entry name" value="Ribosomal_uL1"/>
</dbReference>
<dbReference type="InterPro" id="IPR023674">
    <property type="entry name" value="Ribosomal_uL1-like"/>
</dbReference>
<dbReference type="InterPro" id="IPR028364">
    <property type="entry name" value="Ribosomal_uL1/biogenesis"/>
</dbReference>
<dbReference type="InterPro" id="IPR016095">
    <property type="entry name" value="Ribosomal_uL1_3-a/b-sand"/>
</dbReference>
<dbReference type="InterPro" id="IPR023673">
    <property type="entry name" value="Ribosomal_uL1_CS"/>
</dbReference>
<dbReference type="NCBIfam" id="TIGR01169">
    <property type="entry name" value="rplA_bact"/>
    <property type="match status" value="1"/>
</dbReference>
<dbReference type="PANTHER" id="PTHR36427">
    <property type="entry name" value="54S RIBOSOMAL PROTEIN L1, MITOCHONDRIAL"/>
    <property type="match status" value="1"/>
</dbReference>
<dbReference type="PANTHER" id="PTHR36427:SF3">
    <property type="entry name" value="LARGE RIBOSOMAL SUBUNIT PROTEIN UL1M"/>
    <property type="match status" value="1"/>
</dbReference>
<dbReference type="Pfam" id="PF00687">
    <property type="entry name" value="Ribosomal_L1"/>
    <property type="match status" value="1"/>
</dbReference>
<dbReference type="PIRSF" id="PIRSF002155">
    <property type="entry name" value="Ribosomal_L1"/>
    <property type="match status" value="1"/>
</dbReference>
<dbReference type="SUPFAM" id="SSF56808">
    <property type="entry name" value="Ribosomal protein L1"/>
    <property type="match status" value="1"/>
</dbReference>
<dbReference type="PROSITE" id="PS01199">
    <property type="entry name" value="RIBOSOMAL_L1"/>
    <property type="match status" value="1"/>
</dbReference>
<feature type="chain" id="PRO_1000141445" description="Large ribosomal subunit protein uL1">
    <location>
        <begin position="1"/>
        <end position="231"/>
    </location>
</feature>
<protein>
    <recommendedName>
        <fullName evidence="1">Large ribosomal subunit protein uL1</fullName>
    </recommendedName>
    <alternativeName>
        <fullName evidence="2">50S ribosomal protein L1</fullName>
    </alternativeName>
</protein>
<evidence type="ECO:0000255" key="1">
    <source>
        <dbReference type="HAMAP-Rule" id="MF_01318"/>
    </source>
</evidence>
<evidence type="ECO:0000305" key="2"/>
<gene>
    <name evidence="1" type="primary">rplA</name>
    <name type="ordered locus">PLES_06551</name>
</gene>
<name>RL1_PSEA8</name>